<keyword id="KW-0002">3D-structure</keyword>
<keyword id="KW-0044">Antibiotic</keyword>
<keyword id="KW-0929">Antimicrobial</keyword>
<keyword id="KW-0078">Bacteriocin</keyword>
<keyword id="KW-0175">Coiled coil</keyword>
<keyword id="KW-0903">Direct protein sequencing</keyword>
<keyword id="KW-0255">Endonuclease</keyword>
<keyword id="KW-0378">Hydrolase</keyword>
<keyword id="KW-0456">Lyase</keyword>
<keyword id="KW-0540">Nuclease</keyword>
<keyword id="KW-0614">Plasmid</keyword>
<keyword id="KW-0694">RNA-binding</keyword>
<keyword id="KW-0699">rRNA-binding</keyword>
<keyword id="KW-0964">Secreted</keyword>
<keyword id="KW-0820">tRNA-binding</keyword>
<geneLocation type="plasmid">
    <name>ColE3-CA38</name>
</geneLocation>
<dbReference type="EC" id="4.6.1.-" evidence="7"/>
<dbReference type="EMBL" id="J01574">
    <property type="protein sequence ID" value="AAA88416.1"/>
    <property type="molecule type" value="Genomic_DNA"/>
</dbReference>
<dbReference type="EMBL" id="X02397">
    <property type="protein sequence ID" value="CAA26241.1"/>
    <property type="molecule type" value="Genomic_DNA"/>
</dbReference>
<dbReference type="EMBL" id="X01162">
    <property type="protein sequence ID" value="CAA25607.1"/>
    <property type="molecule type" value="Genomic_DNA"/>
</dbReference>
<dbReference type="PIR" id="S07269">
    <property type="entry name" value="NRECE3"/>
</dbReference>
<dbReference type="RefSeq" id="WP_000012964.1">
    <property type="nucleotide sequence ID" value="NZ_WXYX01000010.1"/>
</dbReference>
<dbReference type="PDB" id="1E44">
    <property type="method" value="X-ray"/>
    <property type="resolution" value="2.40 A"/>
    <property type="chains" value="B=456-551"/>
</dbReference>
<dbReference type="PDB" id="1JCH">
    <property type="method" value="X-ray"/>
    <property type="resolution" value="3.02 A"/>
    <property type="chains" value="A/C=1-551"/>
</dbReference>
<dbReference type="PDB" id="1UJW">
    <property type="method" value="X-ray"/>
    <property type="resolution" value="2.75 A"/>
    <property type="chains" value="B=314-448"/>
</dbReference>
<dbReference type="PDB" id="2B5U">
    <property type="method" value="X-ray"/>
    <property type="resolution" value="2.30 A"/>
    <property type="chains" value="A/C=1-551"/>
</dbReference>
<dbReference type="PDB" id="4UDM">
    <property type="method" value="X-ray"/>
    <property type="resolution" value="2.96 A"/>
    <property type="chains" value="B=456-551"/>
</dbReference>
<dbReference type="PDB" id="4V5K">
    <property type="method" value="X-ray"/>
    <property type="resolution" value="3.20 A"/>
    <property type="chains" value="AY/CY=455-551"/>
</dbReference>
<dbReference type="PDBsum" id="1E44"/>
<dbReference type="PDBsum" id="1JCH"/>
<dbReference type="PDBsum" id="1UJW"/>
<dbReference type="PDBsum" id="2B5U"/>
<dbReference type="PDBsum" id="4UDM"/>
<dbReference type="PDBsum" id="4V5K"/>
<dbReference type="SMR" id="P00646"/>
<dbReference type="DIP" id="DIP-545N"/>
<dbReference type="IntAct" id="P00646">
    <property type="interactions" value="2"/>
</dbReference>
<dbReference type="DrugBank" id="DB04039">
    <property type="generic name" value="3-Oxo-Pentadecanoic Acid"/>
</dbReference>
<dbReference type="DrugBank" id="DB04147">
    <property type="generic name" value="Dodecyldimethylamine N-oxide"/>
</dbReference>
<dbReference type="EvolutionaryTrace" id="P00646"/>
<dbReference type="GO" id="GO:0005576">
    <property type="term" value="C:extracellular region"/>
    <property type="evidence" value="ECO:0007669"/>
    <property type="project" value="UniProtKB-SubCell"/>
</dbReference>
<dbReference type="GO" id="GO:0005727">
    <property type="term" value="C:extrachromosomal circular DNA"/>
    <property type="evidence" value="ECO:0007669"/>
    <property type="project" value="InterPro"/>
</dbReference>
<dbReference type="GO" id="GO:0004519">
    <property type="term" value="F:endonuclease activity"/>
    <property type="evidence" value="ECO:0007669"/>
    <property type="project" value="UniProtKB-KW"/>
</dbReference>
<dbReference type="GO" id="GO:0016829">
    <property type="term" value="F:lyase activity"/>
    <property type="evidence" value="ECO:0007669"/>
    <property type="project" value="UniProtKB-KW"/>
</dbReference>
<dbReference type="GO" id="GO:0043022">
    <property type="term" value="F:ribosome binding"/>
    <property type="evidence" value="ECO:0007669"/>
    <property type="project" value="InterPro"/>
</dbReference>
<dbReference type="GO" id="GO:0019843">
    <property type="term" value="F:rRNA binding"/>
    <property type="evidence" value="ECO:0007669"/>
    <property type="project" value="UniProtKB-KW"/>
</dbReference>
<dbReference type="GO" id="GO:0044325">
    <property type="term" value="F:transmembrane transporter binding"/>
    <property type="evidence" value="ECO:0000353"/>
    <property type="project" value="CAFA"/>
</dbReference>
<dbReference type="GO" id="GO:0000049">
    <property type="term" value="F:tRNA binding"/>
    <property type="evidence" value="ECO:0007669"/>
    <property type="project" value="UniProtKB-KW"/>
</dbReference>
<dbReference type="GO" id="GO:0042742">
    <property type="term" value="P:defense response to bacterium"/>
    <property type="evidence" value="ECO:0007669"/>
    <property type="project" value="UniProtKB-KW"/>
</dbReference>
<dbReference type="GO" id="GO:0031640">
    <property type="term" value="P:killing of cells of another organism"/>
    <property type="evidence" value="ECO:0007669"/>
    <property type="project" value="UniProtKB-KW"/>
</dbReference>
<dbReference type="GO" id="GO:0032413">
    <property type="term" value="P:negative regulation of ion transmembrane transporter activity"/>
    <property type="evidence" value="ECO:0000314"/>
    <property type="project" value="CAFA"/>
</dbReference>
<dbReference type="Gene3D" id="3.10.380.10">
    <property type="entry name" value="Colicin E3-like ribonuclease domain"/>
    <property type="match status" value="1"/>
</dbReference>
<dbReference type="Gene3D" id="1.10.287.620">
    <property type="entry name" value="Helix Hairpins"/>
    <property type="match status" value="1"/>
</dbReference>
<dbReference type="Gene3D" id="1.20.5.740">
    <property type="entry name" value="Single helix bin"/>
    <property type="match status" value="1"/>
</dbReference>
<dbReference type="InterPro" id="IPR024575">
    <property type="entry name" value="Cloacin_colicin"/>
</dbReference>
<dbReference type="InterPro" id="IPR036725">
    <property type="entry name" value="ColE3_ribonuclease_sf"/>
</dbReference>
<dbReference type="InterPro" id="IPR009105">
    <property type="entry name" value="Colicin_E3_ribonuclease"/>
</dbReference>
<dbReference type="InterPro" id="IPR024566">
    <property type="entry name" value="Colicin_R_dom"/>
</dbReference>
<dbReference type="InterPro" id="IPR016128">
    <property type="entry name" value="Pyosin/cloacin_T_dom"/>
</dbReference>
<dbReference type="InterPro" id="IPR036302">
    <property type="entry name" value="Pyosin/cloacin_T_dom_sf"/>
</dbReference>
<dbReference type="Pfam" id="PF03515">
    <property type="entry name" value="Cloacin"/>
    <property type="match status" value="1"/>
</dbReference>
<dbReference type="Pfam" id="PF09000">
    <property type="entry name" value="Cytotoxic"/>
    <property type="match status" value="1"/>
</dbReference>
<dbReference type="Pfam" id="PF11570">
    <property type="entry name" value="E2R135"/>
    <property type="match status" value="1"/>
</dbReference>
<dbReference type="PRINTS" id="PR01295">
    <property type="entry name" value="CLOACIN"/>
</dbReference>
<dbReference type="SUPFAM" id="SSF69369">
    <property type="entry name" value="Cloacin translocation domain"/>
    <property type="match status" value="1"/>
</dbReference>
<dbReference type="SUPFAM" id="SSF69985">
    <property type="entry name" value="Colicin E3 receptor domain"/>
    <property type="match status" value="1"/>
</dbReference>
<dbReference type="SUPFAM" id="SSF63840">
    <property type="entry name" value="Ribonuclease domain of colicin E3"/>
    <property type="match status" value="1"/>
</dbReference>
<sequence>MSGGDGRGHNTGAHSTSGNINGGPTGLGVGGGASDGSGWSSENNPWGGGSGSGIHWGGGSGHGNGGGNGNSGGGSGTGGNLSAVAAPVAFGFPALSTPGAGGLAVSISAGALSAAIADIMAALKGPFKFGLWGVALYGVLPSQIAKDDPNMMSKIVTSLPADDITESPVSSLPLDKATVNVNVRVVDDVKDERQNISVVSGVPMSVPVVDAKPTERPGVFTASIPGAPVLNISVNNSTPAVQTLSPGVTNNTDKDVRPAGFTQGGNTRDAVIRFPKDSGHNAVYVSVSDVLSPDQVKQRQDEENRRQQEWDATHPVEAAERNYERARAELNQANEDVARNQERQAKAVQVYNSRKSELDAANKTLADAIAEIKQFNRFAHDPMAGGHRMWQMAGLKAQRAQTDVNNKQAAFDAAAKEKSDADAALSSAMESRKKKEDKKRSAENNLNDEKNKPRKGFKDYGHDYHPAPKTENIKGLGDLKPGIPKTPKQNGGGKRKRWTGDKGRKIYEWDSQHGELEGYRASDGQHLGSFDPKTGNQLKGPDPKRNIKKYL</sequence>
<comment type="function">
    <text evidence="2 3 7 8 9 11 12 14 15">Colicins are polypeptide toxins produced by and active against E.coli and closely related bacteria (PubMed:3889348, PubMed:4930243, PubMed:4930244, PubMed:6295812). Cleaves 16S rRNA between adenosine-1492 and guanosine-1493 (E.coli 16S rRNA numbering), releasing a 49 nucleotide (nt) 'colicin' fragment (PubMed:20852642). Inactivates 70S ribosomes or 30S subunits by endonucleolytically cleaving 16S RNA at a specific site about 50 nt from its C-terminus (PubMed:4930243, PubMed:4930244, PubMed:782524). Produces 5'-OH-guanosine and a 2',3'-cyclic phosphate adenosine (PubMed:20852642, PubMed:4930244). Mixing a susceptible (e.g. strain K12 / A19) and colicin E3 producing strain results in total protein translation inhibition within 11 minutes (PubMed:4930243). Its activity is inhibited by cognate immunity protein Im3 (PubMed:10986462, PubMed:11741540, PubMed:336615, PubMed:6295812).</text>
</comment>
<comment type="function">
    <text evidence="4 5 10 23 24 26">Uses BtuB, the vitamin B transporter, as a receptor on the outer membrane; binds via the receptor (R) domain (PubMed:14528295, PubMed:4579869). Then the translocation domain (T) probably 'fishes' for its outer membrane translocon protein, OmpF (Probable) (PubMed:16922495, PubMed:18636093). The N-terminal 83 residues (T83) can bind to and occlude OmpF channels. A complex of the cytotoxic C-terminal 96 residues (C96) plus the immunity protein does not occlude OmpF; upon complex separation from the immunity protein C96 becomes disordered and is able to bind OmpF (PubMed:16922495). The N-terminus probably binds TolB and then reinserts into an empty pore of trimeric OmpF; the rest of the protein is pulled through OmpF and crosses the inner membrane, where the cytotoxic fragment is probably released by protease FtsH (Probable) (PubMed:30541793).</text>
</comment>
<comment type="subunit">
    <text evidence="2 4 6 7 8 24">Native colicin E3 is a 1:1 complex of A chain and protein B (cognate immunity protein, Im3); protein A is 1,000-fold more active in inactivating ribosomes than the native complex (PubMed:336615). The cytotoxic fragment (residues 456-551, C95) forms a 1:1 complex with Im3 (PubMed:10986462). The receptor-binding (R) domain binds obliquely to its receptor BtuB without displacing BtuB's central plug; binding unfolds the R domain (PubMed:14528295). The N-terminal 83 residues (T83) bind OmpF; trimeric complexes with colicin E3, BtuB and OmpF can be cross-linked and immunoprecipitated (PubMed:18636093). Probably inserts into the OmpF pore as an unfolded peptide and spans the OmpF pore (Probable) (PubMed:18636093). In a complex with T.thermophilus 70S ribosomes, cytotoxic fragment C96 contacts 16S rRNA, 23S rRNA, mRNA, P-site tRNA and ribosomal protein uS12 (PubMed:20852642).</text>
</comment>
<comment type="interaction">
    <interactant intactId="EBI-1029919">
        <id>P00646</id>
    </interactant>
    <interactant intactId="EBI-1029912">
        <id>P02984</id>
        <label>imm</label>
    </interactant>
    <organismsDiffer>false</organismsDiffer>
    <experiments>2</experiments>
</comment>
<comment type="subcellular location">
    <subcellularLocation>
        <location evidence="13">Secreted</location>
    </subcellularLocation>
</comment>
<comment type="induction">
    <text evidence="27">Probably induced by SOS-stress.</text>
</comment>
<comment type="domain">
    <text evidence="3 4 6 7">Has 3 domains, the translocation (T) domain, receptor-binding (R) domain and the cytotoxic RNase (C) domain (PubMed:11741540). The R domain forms a 100 Angstroms-long antiparallel helical hairpin with the T and C domains forming globular domains at each end; the Im3 immunity protein binds between the T and C domains and probably blocks access to the 16S rRNA substrate (PubMed:11741540). The hairpin motif interacts with BtuB, but BtuB does not translocate the toxin (PubMed:14528295). The disordered N-terminus of the T domain (residues 1-83) binds to and occludes OmpF trimers when added from the trans- but not cis-side (PubMed:18636093). Does not undergo major conformational changes in the T.thermophilus ribosome; however the 10 N-terminal residues (residues 456-465 in the whole protein) which form an alpha helix in complex with Im3, elongate to contact uS12 and may be part of the mechanism of 16S rrRNA recognition (PubMed:20852642).</text>
</comment>
<comment type="similarity">
    <text evidence="20">Belongs to the cloacin colicin family.</text>
</comment>
<name>CEA3_ECOLX</name>
<feature type="chain" id="PRO_0000218677" description="Colicin E3">
    <location>
        <begin position="1"/>
        <end position="551"/>
    </location>
</feature>
<feature type="region of interest" description="Translocation (T) domain" evidence="3">
    <location>
        <begin position="1"/>
        <end position="315"/>
    </location>
</feature>
<feature type="region of interest" description="Disordered" evidence="1">
    <location>
        <begin position="1"/>
        <end position="74"/>
    </location>
</feature>
<feature type="region of interest" description="Disordered" evidence="1">
    <location>
        <begin position="243"/>
        <end position="269"/>
    </location>
</feature>
<feature type="region of interest" description="Disordered" evidence="1">
    <location>
        <begin position="293"/>
        <end position="320"/>
    </location>
</feature>
<feature type="region of interest" description="Receptor-binding (R) domain" evidence="3">
    <location>
        <begin position="316"/>
        <end position="450"/>
    </location>
</feature>
<feature type="region of interest" description="Disordered" evidence="1">
    <location>
        <begin position="406"/>
        <end position="505"/>
    </location>
</feature>
<feature type="region of interest" description="Linker" evidence="3">
    <location>
        <begin position="451"/>
        <end position="456"/>
    </location>
</feature>
<feature type="region of interest" description="Ribosome inactivating activity">
    <location>
        <begin position="455"/>
        <end position="551"/>
    </location>
</feature>
<feature type="region of interest" description="Cytotoxic RNase (C) domain" evidence="3">
    <location>
        <begin position="457"/>
        <end position="551"/>
    </location>
</feature>
<feature type="region of interest" description="Disordered" evidence="1">
    <location>
        <begin position="517"/>
        <end position="551"/>
    </location>
</feature>
<feature type="region of interest" description="Binding of immunity protein">
    <location>
        <begin position="530"/>
        <end position="551"/>
    </location>
</feature>
<feature type="coiled-coil region" evidence="3 4 28 29">
    <location>
        <begin position="316"/>
        <end position="378"/>
    </location>
</feature>
<feature type="coiled-coil region" evidence="3 4 28 29">
    <location>
        <begin position="386"/>
        <end position="450"/>
    </location>
</feature>
<feature type="short sequence motif" description="Binds to TolB" evidence="21">
    <location>
        <begin position="35"/>
        <end position="39"/>
    </location>
</feature>
<feature type="short sequence motif" description="Hairpin" evidence="21 22">
    <location>
        <begin position="379"/>
        <end position="385"/>
    </location>
</feature>
<feature type="compositionally biased region" description="Gly residues" evidence="1">
    <location>
        <begin position="20"/>
        <end position="35"/>
    </location>
</feature>
<feature type="compositionally biased region" description="Low complexity" evidence="1">
    <location>
        <begin position="36"/>
        <end position="45"/>
    </location>
</feature>
<feature type="compositionally biased region" description="Gly residues" evidence="1">
    <location>
        <begin position="46"/>
        <end position="74"/>
    </location>
</feature>
<feature type="compositionally biased region" description="Basic and acidic residues" evidence="1">
    <location>
        <begin position="296"/>
        <end position="320"/>
    </location>
</feature>
<feature type="compositionally biased region" description="Basic and acidic residues" evidence="1">
    <location>
        <begin position="430"/>
        <end position="472"/>
    </location>
</feature>
<feature type="active site" description="Proton donor" evidence="21 25">
    <location>
        <position position="513"/>
    </location>
</feature>
<feature type="active site" description="Proton acceptor" evidence="21 25">
    <location>
        <position position="517"/>
    </location>
</feature>
<feature type="active site" evidence="21">
    <location>
        <position position="545"/>
    </location>
</feature>
<feature type="site" description="Stabilizes positive charge on His-513" evidence="25">
    <location>
        <position position="510"/>
    </location>
</feature>
<feature type="mutagenesis site" description="10-fold reduced killing activity on susceptible E.coli." evidence="3">
    <original>FAHDPM</original>
    <variation>AAHDPA</variation>
    <location>
        <begin position="378"/>
        <end position="383"/>
    </location>
</feature>
<feature type="mutagenesis site" description="10- to 50-fold reduced killing activity on susceptible E.coli." evidence="3">
    <original>MAGGHRMW</original>
    <variation>AAGGHRMA</variation>
    <location>
        <begin position="383"/>
        <end position="390"/>
    </location>
</feature>
<feature type="mutagenesis site" description="Complete loss of cytotoxic activity." evidence="3">
    <original>D</original>
    <variation>A</variation>
    <variation>N</variation>
    <location>
        <position position="510"/>
    </location>
</feature>
<feature type="mutagenesis site" description="Nearly complete loss of rRNase activity in vitro." evidence="7">
    <original>D</original>
    <variation>A</variation>
    <location>
        <position position="510"/>
    </location>
</feature>
<feature type="mutagenesis site" description="Complete loss of cytotoxic activity. Nearly complete loss of rRNase activity in vitro." evidence="3 7">
    <original>H</original>
    <variation>A</variation>
    <location>
        <position position="513"/>
    </location>
</feature>
<feature type="mutagenesis site" description="Complete loss of cytotoxic activity." evidence="3">
    <original>E</original>
    <variation>A</variation>
    <variation>Q</variation>
    <location>
        <position position="517"/>
    </location>
</feature>
<feature type="mutagenesis site" description="Complete loss of rRNase activity." evidence="7">
    <original>E</original>
    <variation>A</variation>
    <location>
        <position position="517"/>
    </location>
</feature>
<feature type="mutagenesis site" description="No loss of cytotoxic activity." evidence="3">
    <original>K</original>
    <variation>A</variation>
    <location>
        <position position="539"/>
    </location>
</feature>
<feature type="mutagenesis site" description="1000-10,000-fold diminished cytotoxic activity." evidence="3">
    <original>R</original>
    <variation>A</variation>
    <location>
        <position position="545"/>
    </location>
</feature>
<feature type="strand" evidence="35">
    <location>
        <begin position="93"/>
        <end position="96"/>
    </location>
</feature>
<feature type="strand" evidence="35">
    <location>
        <begin position="102"/>
        <end position="108"/>
    </location>
</feature>
<feature type="helix" evidence="35">
    <location>
        <begin position="114"/>
        <end position="123"/>
    </location>
</feature>
<feature type="strand" evidence="35">
    <location>
        <begin position="128"/>
        <end position="130"/>
    </location>
</feature>
<feature type="strand" evidence="35">
    <location>
        <begin position="132"/>
        <end position="139"/>
    </location>
</feature>
<feature type="helix" evidence="35">
    <location>
        <begin position="141"/>
        <end position="143"/>
    </location>
</feature>
<feature type="strand" evidence="35">
    <location>
        <begin position="147"/>
        <end position="150"/>
    </location>
</feature>
<feature type="strand" evidence="35">
    <location>
        <begin position="154"/>
        <end position="160"/>
    </location>
</feature>
<feature type="helix" evidence="35">
    <location>
        <begin position="161"/>
        <end position="164"/>
    </location>
</feature>
<feature type="strand" evidence="35">
    <location>
        <begin position="165"/>
        <end position="167"/>
    </location>
</feature>
<feature type="helix" evidence="35">
    <location>
        <begin position="169"/>
        <end position="171"/>
    </location>
</feature>
<feature type="strand" evidence="35">
    <location>
        <begin position="177"/>
        <end position="182"/>
    </location>
</feature>
<feature type="strand" evidence="35">
    <location>
        <begin position="184"/>
        <end position="192"/>
    </location>
</feature>
<feature type="strand" evidence="35">
    <location>
        <begin position="194"/>
        <end position="202"/>
    </location>
</feature>
<feature type="strand" evidence="35">
    <location>
        <begin position="204"/>
        <end position="210"/>
    </location>
</feature>
<feature type="strand" evidence="34">
    <location>
        <begin position="211"/>
        <end position="214"/>
    </location>
</feature>
<feature type="strand" evidence="35">
    <location>
        <begin position="220"/>
        <end position="222"/>
    </location>
</feature>
<feature type="strand" evidence="35">
    <location>
        <begin position="230"/>
        <end position="237"/>
    </location>
</feature>
<feature type="strand" evidence="34">
    <location>
        <begin position="239"/>
        <end position="241"/>
    </location>
</feature>
<feature type="strand" evidence="35">
    <location>
        <begin position="248"/>
        <end position="250"/>
    </location>
</feature>
<feature type="strand" evidence="34">
    <location>
        <begin position="253"/>
        <end position="255"/>
    </location>
</feature>
<feature type="turn" evidence="35">
    <location>
        <begin position="261"/>
        <end position="266"/>
    </location>
</feature>
<feature type="strand" evidence="35">
    <location>
        <begin position="267"/>
        <end position="273"/>
    </location>
</feature>
<feature type="helix" evidence="35">
    <location>
        <begin position="276"/>
        <end position="278"/>
    </location>
</feature>
<feature type="strand" evidence="35">
    <location>
        <begin position="283"/>
        <end position="289"/>
    </location>
</feature>
<feature type="helix" evidence="35">
    <location>
        <begin position="293"/>
        <end position="313"/>
    </location>
</feature>
<feature type="helix" evidence="35">
    <location>
        <begin position="315"/>
        <end position="375"/>
    </location>
</feature>
<feature type="helix" evidence="35">
    <location>
        <begin position="376"/>
        <end position="378"/>
    </location>
</feature>
<feature type="strand" evidence="34">
    <location>
        <begin position="382"/>
        <end position="385"/>
    </location>
</feature>
<feature type="helix" evidence="35">
    <location>
        <begin position="386"/>
        <end position="448"/>
    </location>
</feature>
<feature type="helix" evidence="35">
    <location>
        <begin position="457"/>
        <end position="460"/>
    </location>
</feature>
<feature type="turn" evidence="35">
    <location>
        <begin position="461"/>
        <end position="463"/>
    </location>
</feature>
<feature type="helix" evidence="35">
    <location>
        <begin position="470"/>
        <end position="472"/>
    </location>
</feature>
<feature type="strand" evidence="34">
    <location>
        <begin position="475"/>
        <end position="477"/>
    </location>
</feature>
<feature type="strand" evidence="35">
    <location>
        <begin position="480"/>
        <end position="482"/>
    </location>
</feature>
<feature type="strand" evidence="35">
    <location>
        <begin position="489"/>
        <end position="492"/>
    </location>
</feature>
<feature type="strand" evidence="35">
    <location>
        <begin position="497"/>
        <end position="500"/>
    </location>
</feature>
<feature type="turn" evidence="35">
    <location>
        <begin position="501"/>
        <end position="504"/>
    </location>
</feature>
<feature type="strand" evidence="35">
    <location>
        <begin position="505"/>
        <end position="510"/>
    </location>
</feature>
<feature type="turn" evidence="35">
    <location>
        <begin position="511"/>
        <end position="514"/>
    </location>
</feature>
<feature type="strand" evidence="35">
    <location>
        <begin position="515"/>
        <end position="520"/>
    </location>
</feature>
<feature type="turn" evidence="35">
    <location>
        <begin position="521"/>
        <end position="523"/>
    </location>
</feature>
<feature type="strand" evidence="35">
    <location>
        <begin position="525"/>
        <end position="530"/>
    </location>
</feature>
<feature type="turn" evidence="35">
    <location>
        <begin position="532"/>
        <end position="534"/>
    </location>
</feature>
<feature type="strand" evidence="35">
    <location>
        <begin position="537"/>
        <end position="539"/>
    </location>
</feature>
<feature type="helix" evidence="35">
    <location>
        <begin position="548"/>
        <end position="550"/>
    </location>
</feature>
<gene>
    <name type="primary">ceaC</name>
    <name evidence="19" type="synonym">col</name>
</gene>
<accession>P00646</accession>
<reference key="1">
    <citation type="journal article" date="1985" name="J. Mol. Biol.">
        <title>Colicin E3 and its immunity genes.</title>
        <authorList>
            <person name="Masaki H."/>
            <person name="Ohta T."/>
        </authorList>
    </citation>
    <scope>NUCLEOTIDE SEQUENCE [GENOMIC DNA]</scope>
    <scope>FUNCTION</scope>
    <scope>INDUCTION</scope>
    <source>
        <plasmid>ColE3-CA38</plasmid>
    </source>
</reference>
<reference key="2">
    <citation type="journal article" date="1984" name="Nucleic Acids Res.">
        <title>Comparative nucleotide sequences encoding the immunity proteins and the carboxyl-terminal peptides of colicins E2 and E3.</title>
        <authorList>
            <person name="Lau P.C.K."/>
            <person name="Rowsome R.W."/>
            <person name="Zuker M."/>
            <person name="Visentin L.P."/>
        </authorList>
    </citation>
    <scope>NUCLEOTIDE SEQUENCE [GENOMIC DNA] OF 370-551</scope>
    <source>
        <plasmid>ColE3-CA38</plasmid>
    </source>
</reference>
<reference key="3">
    <citation type="journal article" date="1983" name="Nucleic Acids Res.">
        <title>Nucleotide sequence for the catalytic domain of colicin E3 and its immunity protein. Evidence for a third gene overlapping colicin.</title>
        <authorList>
            <person name="Mock M."/>
            <person name="Miyada C.G."/>
            <person name="Gunsalus R.P."/>
        </authorList>
    </citation>
    <scope>NUCLEOTIDE SEQUENCE [GENOMIC DNA] OF 428-551</scope>
</reference>
<reference key="4">
    <citation type="journal article" date="1982" name="FEBS Lett.">
        <title>A plasmid region encoding the active fragment and the inhibitor protein of colicin E3-CA38.</title>
        <authorList>
            <person name="Masaki H."/>
            <person name="Ohta T."/>
        </authorList>
    </citation>
    <scope>NUCLEOTIDE SEQUENCE [GENOMIC DNA] OF 445-551</scope>
    <scope>FUNCTION</scope>
    <source>
        <plasmid>ColE3-CA38</plasmid>
    </source>
</reference>
<reference key="5">
    <citation type="journal article" date="1978" name="J. Biochem.">
        <title>Amino acid sequence of an active fragment (T2A) of colicin E3.</title>
        <authorList>
            <person name="Suzuki K."/>
            <person name="Imahori K."/>
        </authorList>
    </citation>
    <scope>PROTEIN SEQUENCE OF 455-551</scope>
</reference>
<reference key="6">
    <citation type="journal article" date="1971" name="Proc. Natl. Acad. Sci. U.S.A.">
        <title>Effect of colicin E3 upon the 30S ribosomal subunit of Escherichia coli.</title>
        <authorList>
            <person name="Senior B.W."/>
            <person name="Holland I.B."/>
        </authorList>
    </citation>
    <scope>FUNCTION</scope>
    <scope>FUNCTION AS AN ENDORIBONUCLEASE</scope>
    <source>
        <strain>CA38</strain>
    </source>
</reference>
<reference key="7">
    <citation type="journal article" date="1971" name="Proc. Natl. Acad. Sci. U.S.A.">
        <title>Specific inactivation of 16S ribosomal RNA induced by colicin E3 in vivo.</title>
        <authorList>
            <person name="Bowman C.M."/>
            <person name="Dahlberg J.E."/>
            <person name="Ikemura T."/>
            <person name="Konisky J."/>
            <person name="Nomura M."/>
        </authorList>
    </citation>
    <scope>FUNCTION AS AN ENDORIBONUCLEASE</scope>
    <scope>FUNCTION</scope>
    <scope>CATALYTIC ACTIVITY</scope>
    <source>
        <strain>CA38</strain>
    </source>
</reference>
<reference key="8">
    <citation type="journal article" date="1973" name="J. Bacteriol.">
        <title>Transport of vitamin B12 in Escherichia coli: common receptor sites for vitamin B12 and the E colicins on the outer membrane of the cell envelope.</title>
        <authorList>
            <person name="Di Masi D.R."/>
            <person name="White J.C."/>
            <person name="Schnaitman C.A."/>
            <person name="Bradbeer C."/>
        </authorList>
    </citation>
    <scope>RECEPTOR IDENTIFICATION</scope>
</reference>
<reference key="9">
    <citation type="journal article" date="1976" name="Biochemistry">
        <title>Proteolytic and chemical modification of colicin E3 activity.</title>
        <authorList>
            <person name="Lau C."/>
            <person name="Richards F.M."/>
        </authorList>
    </citation>
    <scope>FUNCTION AS AN ENDORIBONUCLEASE</scope>
</reference>
<reference key="10">
    <citation type="journal article" date="1971" name="Proc. Natl. Acad. Sci. U.S.A.">
        <title>Inactivation of ribosomes in vitro by colicin E 3.</title>
        <authorList>
            <person name="Boon T."/>
        </authorList>
    </citation>
    <scope>FUNCTION AS AN ENDORIBONUCLEASE</scope>
    <scope>SUBCELLULAR LOCATION</scope>
</reference>
<reference key="11">
    <citation type="journal article" date="1977" name="J. Biochem.">
        <title>Purification and characterization of active component and active fragment of colicin E3.</title>
        <authorList>
            <person name="Ohno S."/>
            <person name="Ohno-Iwashita Y."/>
            <person name="Suzuki K."/>
            <person name="Imahori K."/>
        </authorList>
    </citation>
    <scope>SUBUNIT</scope>
</reference>
<reference key="12">
    <citation type="journal article" date="2006" name="Biochemistry">
        <title>The colicin E3 outer membrane translocon: immunity protein release allows interaction of the cytotoxic domain with OmpF porin.</title>
        <authorList>
            <person name="Zakharov S.D."/>
            <person name="Zhalnina M.V."/>
            <person name="Sharma O."/>
            <person name="Cramer W.A."/>
        </authorList>
    </citation>
    <scope>TRANSLOCON IDENTIFICATION</scope>
</reference>
<reference key="13">
    <citation type="journal article" date="2008" name="EMBO J.">
        <title>Crystal structures of the OmpF porin: function in a colicin translocon.</title>
        <authorList>
            <person name="Yamashita E."/>
            <person name="Zhalnina M.V."/>
            <person name="Zakharov S.D."/>
            <person name="Sharma O."/>
            <person name="Cramer W.A."/>
        </authorList>
    </citation>
    <scope>SUBUNIT</scope>
    <scope>DOMAIN</scope>
</reference>
<reference key="14">
    <citation type="journal article" date="2018" name="Biochem. J.">
        <title>On mechanisms of colicin import: the outer membrane quandary.</title>
        <authorList>
            <person name="Cramer W.A."/>
            <person name="Sharma O."/>
            <person name="Zakharov S.D."/>
        </authorList>
    </citation>
    <scope>REVIEW OF COLICIN IMPORT INTO TARGET CELLS</scope>
</reference>
<reference evidence="30" key="15">
    <citation type="journal article" date="2000" name="Structure">
        <title>Inhibition of a ribosome-inactivating ribonuclease: the crystal structure of the cytotoxic domain of colicin E3 in complex with its immunity protein.</title>
        <authorList>
            <person name="Carr S."/>
            <person name="Walker D."/>
            <person name="James R."/>
            <person name="Kleanthous C."/>
            <person name="Hemmings A.M."/>
        </authorList>
    </citation>
    <scope>X-RAY CRYSTALLOGRAPHY (2.40 ANGSTROMS) OF 456-551 IN COMPLEX WITH IMMUNITY PROTEIN</scope>
    <scope>SUBUNIT</scope>
</reference>
<reference evidence="31" key="16">
    <citation type="journal article" date="2001" name="Mol. Cell">
        <title>Crystal structure of colicin E3: implications for cell entry and ribosome inactivation.</title>
        <authorList>
            <person name="Soelaiman S."/>
            <person name="Jakes K."/>
            <person name="Wu N."/>
            <person name="Li C."/>
            <person name="Shoham M."/>
        </authorList>
    </citation>
    <scope>X-RAY CRYSTALLOGRAPHY (3.02 ANGSTROMS) IN COMPLEX WITH IMMUNITY PROTEIN</scope>
    <scope>PROBABLE ACTIVE SITES</scope>
    <scope>DOMAIN</scope>
    <scope>MOTIF</scope>
    <scope>COILED COIL</scope>
    <scope>MUTAGENESIS OF 378-PHE--MET-383; 383-MET--TRP-390; ASP-510; HIS-513; GLU-517; LYS-539 AND ARG-545</scope>
</reference>
<reference evidence="32" key="17">
    <citation type="journal article" date="2003" name="Nat. Struct. Biol.">
        <title>The structure of BtuB with bound colicin E3 R-domain implies a translocon.</title>
        <authorList>
            <person name="Kurisu G."/>
            <person name="Zakharov S.D."/>
            <person name="Zhalnina M.V."/>
            <person name="Bano S."/>
            <person name="Eroukova V.Y."/>
            <person name="Rokitskaya T.I."/>
            <person name="Antonenko Y.N."/>
            <person name="Wiener M.C."/>
            <person name="Cramer W.A."/>
        </authorList>
    </citation>
    <scope>X-RAY CRYSTALLOGRAPHY (2.75 ANGSTROMS) OF 314-448 IN COMPLEX WITH BTUB RECEPTOR</scope>
    <scope>FUNCTION</scope>
    <scope>DOMAIN</scope>
    <scope>MOTIF</scope>
    <scope>COILED COIL</scope>
</reference>
<reference evidence="33" key="18">
    <citation type="journal article" date="2010" name="Nat. Struct. Mol. Biol.">
        <title>Structural basis for 16S ribosomal RNA cleavage by the cytotoxic domain of colicin E3.</title>
        <authorList>
            <person name="Ng C.L."/>
            <person name="Lang K."/>
            <person name="Meenan N.A."/>
            <person name="Sharma A."/>
            <person name="Kelley A.C."/>
            <person name="Kleanthous C."/>
            <person name="Ramakrishnan V."/>
        </authorList>
    </citation>
    <scope>X-RAY CRYSTALLOGRAPHY (3.20 ANGSTROMS) OF 455-551 IN COMPLEX WITH T.THERMOPHILUS 70S RIBOSOME</scope>
    <scope>FUNCTION</scope>
    <scope>CATALYTIC ACTIVITY</scope>
    <scope>PROBABLE ACTIVE SITES</scope>
    <scope>PROBABLE REACTION MECHANISM</scope>
    <scope>SUBUNIT</scope>
    <scope>DOMAIN</scope>
    <scope>MRNA-BINDING</scope>
    <scope>RRNA-BINDING</scope>
    <scope>TRRNA-BINDING</scope>
    <scope>MUTAGENESIS OF ASP-510; HIS-513 AND GLU-517</scope>
</reference>
<evidence type="ECO:0000256" key="1">
    <source>
        <dbReference type="SAM" id="MobiDB-lite"/>
    </source>
</evidence>
<evidence type="ECO:0000269" key="2">
    <source>
    </source>
</evidence>
<evidence type="ECO:0000269" key="3">
    <source>
    </source>
</evidence>
<evidence type="ECO:0000269" key="4">
    <source>
    </source>
</evidence>
<evidence type="ECO:0000269" key="5">
    <source>
    </source>
</evidence>
<evidence type="ECO:0000269" key="6">
    <source>
    </source>
</evidence>
<evidence type="ECO:0000269" key="7">
    <source>
    </source>
</evidence>
<evidence type="ECO:0000269" key="8">
    <source>
    </source>
</evidence>
<evidence type="ECO:0000269" key="9">
    <source>
    </source>
</evidence>
<evidence type="ECO:0000269" key="10">
    <source>
    </source>
</evidence>
<evidence type="ECO:0000269" key="11">
    <source>
    </source>
</evidence>
<evidence type="ECO:0000269" key="12">
    <source>
    </source>
</evidence>
<evidence type="ECO:0000269" key="13">
    <source>
    </source>
</evidence>
<evidence type="ECO:0000269" key="14">
    <source>
    </source>
</evidence>
<evidence type="ECO:0000269" key="15">
    <source>
    </source>
</evidence>
<evidence type="ECO:0000303" key="16">
    <source>
    </source>
</evidence>
<evidence type="ECO:0000303" key="17">
    <source>
    </source>
</evidence>
<evidence type="ECO:0000303" key="18">
    <source>
    </source>
</evidence>
<evidence type="ECO:0000303" key="19">
    <source>
    </source>
</evidence>
<evidence type="ECO:0000305" key="20"/>
<evidence type="ECO:0000305" key="21">
    <source>
    </source>
</evidence>
<evidence type="ECO:0000305" key="22">
    <source>
    </source>
</evidence>
<evidence type="ECO:0000305" key="23">
    <source>
    </source>
</evidence>
<evidence type="ECO:0000305" key="24">
    <source>
    </source>
</evidence>
<evidence type="ECO:0000305" key="25">
    <source>
    </source>
</evidence>
<evidence type="ECO:0000305" key="26">
    <source>
    </source>
</evidence>
<evidence type="ECO:0000305" key="27">
    <source>
    </source>
</evidence>
<evidence type="ECO:0000312" key="28">
    <source>
        <dbReference type="PDB" id="1JCH"/>
    </source>
</evidence>
<evidence type="ECO:0000312" key="29">
    <source>
        <dbReference type="PDB" id="1UJW"/>
    </source>
</evidence>
<evidence type="ECO:0007744" key="30">
    <source>
        <dbReference type="PDB" id="1E44"/>
    </source>
</evidence>
<evidence type="ECO:0007744" key="31">
    <source>
        <dbReference type="PDB" id="1JCH"/>
    </source>
</evidence>
<evidence type="ECO:0007744" key="32">
    <source>
        <dbReference type="PDB" id="1UJW"/>
    </source>
</evidence>
<evidence type="ECO:0007744" key="33">
    <source>
        <dbReference type="PDB" id="4V5K"/>
    </source>
</evidence>
<evidence type="ECO:0007829" key="34">
    <source>
        <dbReference type="PDB" id="1JCH"/>
    </source>
</evidence>
<evidence type="ECO:0007829" key="35">
    <source>
        <dbReference type="PDB" id="2B5U"/>
    </source>
</evidence>
<organism>
    <name type="scientific">Escherichia coli</name>
    <dbReference type="NCBI Taxonomy" id="562"/>
    <lineage>
        <taxon>Bacteria</taxon>
        <taxon>Pseudomonadati</taxon>
        <taxon>Pseudomonadota</taxon>
        <taxon>Gammaproteobacteria</taxon>
        <taxon>Enterobacterales</taxon>
        <taxon>Enterobacteriaceae</taxon>
        <taxon>Escherichia</taxon>
    </lineage>
</organism>
<protein>
    <recommendedName>
        <fullName evidence="18">Colicin E3</fullName>
        <ecNumber evidence="7">4.6.1.-</ecNumber>
    </recommendedName>
    <alternativeName>
        <fullName evidence="16 17">Colicin E3 A chain</fullName>
        <shortName>colE3</shortName>
    </alternativeName>
    <alternativeName>
        <fullName>Ribonuclease</fullName>
    </alternativeName>
</protein>
<proteinExistence type="evidence at protein level"/>